<organism>
    <name type="scientific">Gloeobacter violaceus (strain ATCC 29082 / PCC 7421)</name>
    <dbReference type="NCBI Taxonomy" id="251221"/>
    <lineage>
        <taxon>Bacteria</taxon>
        <taxon>Bacillati</taxon>
        <taxon>Cyanobacteriota</taxon>
        <taxon>Cyanophyceae</taxon>
        <taxon>Gloeobacterales</taxon>
        <taxon>Gloeobacteraceae</taxon>
        <taxon>Gloeobacter</taxon>
    </lineage>
</organism>
<keyword id="KW-0997">Cell inner membrane</keyword>
<keyword id="KW-1003">Cell membrane</keyword>
<keyword id="KW-0201">Cytochrome c-type biogenesis</keyword>
<keyword id="KW-0472">Membrane</keyword>
<keyword id="KW-1185">Reference proteome</keyword>
<keyword id="KW-0812">Transmembrane</keyword>
<keyword id="KW-1133">Transmembrane helix</keyword>
<sequence>MGSDGLQWVSRSLEHRPMTSLWRDIRHEVAAWLGSLKLAIGLFLAIAAASIAGTVIPQGESTDFYRQNYPDSGAVVWGFVTWRFIISLGLDEVYRSWWFVALLLLLATSLTICTFRRQIPMLKAAQNWKFYTEPRQLSKYALRTAIPARGTGPLAEQLRAGRYKVYQRDDLIYATKGTIGRVGPIVVHVSLLLIMAGAMIGAFGGYQTQRMTLAGDSFDIQQVEQSRLSLARPPDWTVRVNKFWIDYRPDGSVDQFHSDLSVVSPAGKELERKTISVNDPLIYDGVTMYQASWAVGAFKLRLNDSPVLTIPMQPIEAPNGQEAWGQAIPFDKDGRVALQMVTRGLQGSLMLLPFNPRTGETVREAATPARVGKPVSVLGQRLVIEELVGQTGIQIKADPGIPVVYAGFALLMVGLAMSYLSHSQVWAIYRDGQLHVAGRTNRAQIGFERELVRMVAAVQTPRPRTSDALSAAQE</sequence>
<feature type="chain" id="PRO_0000363613" description="Cytochrome c biogenesis protein CcsB">
    <location>
        <begin position="1"/>
        <end position="474"/>
    </location>
</feature>
<feature type="transmembrane region" description="Helical" evidence="1">
    <location>
        <begin position="36"/>
        <end position="56"/>
    </location>
</feature>
<feature type="transmembrane region" description="Helical" evidence="1">
    <location>
        <begin position="96"/>
        <end position="116"/>
    </location>
</feature>
<feature type="transmembrane region" description="Helical" evidence="1">
    <location>
        <begin position="182"/>
        <end position="202"/>
    </location>
</feature>
<comment type="function">
    <text evidence="1">Required during biogenesis of c-type cytochromes (cytochrome c6 and cytochrome f) at the step of heme attachment.</text>
</comment>
<comment type="subunit">
    <text evidence="1">May interact with CcsA.</text>
</comment>
<comment type="subcellular location">
    <subcellularLocation>
        <location evidence="1">Cell inner membrane</location>
        <topology evidence="1">Multi-pass membrane protein</topology>
    </subcellularLocation>
</comment>
<comment type="similarity">
    <text evidence="1">Belongs to the Ccs1/CcsB family.</text>
</comment>
<dbReference type="EMBL" id="BA000045">
    <property type="protein sequence ID" value="BAC89962.1"/>
    <property type="molecule type" value="Genomic_DNA"/>
</dbReference>
<dbReference type="RefSeq" id="NP_924967.1">
    <property type="nucleotide sequence ID" value="NC_005125.1"/>
</dbReference>
<dbReference type="FunCoup" id="Q7NJ11">
    <property type="interactions" value="1"/>
</dbReference>
<dbReference type="STRING" id="251221.gene:10759513"/>
<dbReference type="EnsemblBacteria" id="BAC89962">
    <property type="protein sequence ID" value="BAC89962"/>
    <property type="gene ID" value="BAC89962"/>
</dbReference>
<dbReference type="KEGG" id="gvi:glr2021"/>
<dbReference type="PATRIC" id="fig|251221.4.peg.2055"/>
<dbReference type="eggNOG" id="COG1333">
    <property type="taxonomic scope" value="Bacteria"/>
</dbReference>
<dbReference type="HOGENOM" id="CLU_034630_0_0_3"/>
<dbReference type="InParanoid" id="Q7NJ11"/>
<dbReference type="OrthoDB" id="9770923at2"/>
<dbReference type="PhylomeDB" id="Q7NJ11"/>
<dbReference type="Proteomes" id="UP000000557">
    <property type="component" value="Chromosome"/>
</dbReference>
<dbReference type="GO" id="GO:0005886">
    <property type="term" value="C:plasma membrane"/>
    <property type="evidence" value="ECO:0007669"/>
    <property type="project" value="UniProtKB-SubCell"/>
</dbReference>
<dbReference type="GO" id="GO:0017004">
    <property type="term" value="P:cytochrome complex assembly"/>
    <property type="evidence" value="ECO:0007669"/>
    <property type="project" value="UniProtKB-UniRule"/>
</dbReference>
<dbReference type="HAMAP" id="MF_01392">
    <property type="entry name" value="CytC_Ccs1"/>
    <property type="match status" value="1"/>
</dbReference>
<dbReference type="InterPro" id="IPR023494">
    <property type="entry name" value="Cyt_c_bgen_Ccs1/CcsB/ResB"/>
</dbReference>
<dbReference type="InterPro" id="IPR007816">
    <property type="entry name" value="ResB-like_domain"/>
</dbReference>
<dbReference type="PANTHER" id="PTHR31566">
    <property type="entry name" value="CYTOCHROME C BIOGENESIS PROTEIN CCS1, CHLOROPLASTIC"/>
    <property type="match status" value="1"/>
</dbReference>
<dbReference type="PANTHER" id="PTHR31566:SF0">
    <property type="entry name" value="CYTOCHROME C BIOGENESIS PROTEIN CCS1, CHLOROPLASTIC"/>
    <property type="match status" value="1"/>
</dbReference>
<dbReference type="Pfam" id="PF05140">
    <property type="entry name" value="ResB"/>
    <property type="match status" value="2"/>
</dbReference>
<gene>
    <name evidence="1" type="primary">ccsB</name>
    <name evidence="1" type="synonym">ccs1</name>
    <name type="ordered locus">glr2021</name>
</gene>
<name>CCS1_GLOVI</name>
<accession>Q7NJ11</accession>
<proteinExistence type="inferred from homology"/>
<reference key="1">
    <citation type="journal article" date="2003" name="DNA Res.">
        <title>Complete genome structure of Gloeobacter violaceus PCC 7421, a cyanobacterium that lacks thylakoids.</title>
        <authorList>
            <person name="Nakamura Y."/>
            <person name="Kaneko T."/>
            <person name="Sato S."/>
            <person name="Mimuro M."/>
            <person name="Miyashita H."/>
            <person name="Tsuchiya T."/>
            <person name="Sasamoto S."/>
            <person name="Watanabe A."/>
            <person name="Kawashima K."/>
            <person name="Kishida Y."/>
            <person name="Kiyokawa C."/>
            <person name="Kohara M."/>
            <person name="Matsumoto M."/>
            <person name="Matsuno A."/>
            <person name="Nakazaki N."/>
            <person name="Shimpo S."/>
            <person name="Takeuchi C."/>
            <person name="Yamada M."/>
            <person name="Tabata S."/>
        </authorList>
    </citation>
    <scope>NUCLEOTIDE SEQUENCE [LARGE SCALE GENOMIC DNA]</scope>
    <source>
        <strain>ATCC 29082 / PCC 7421</strain>
    </source>
</reference>
<evidence type="ECO:0000255" key="1">
    <source>
        <dbReference type="HAMAP-Rule" id="MF_01392"/>
    </source>
</evidence>
<protein>
    <recommendedName>
        <fullName evidence="1">Cytochrome c biogenesis protein CcsB</fullName>
    </recommendedName>
</protein>